<accession>P9WQ73</accession>
<accession>L0T803</accession>
<accession>P63514</accession>
<accession>Q10534</accession>
<organism>
    <name type="scientific">Mycobacterium tuberculosis (strain ATCC 25618 / H37Rv)</name>
    <dbReference type="NCBI Taxonomy" id="83332"/>
    <lineage>
        <taxon>Bacteria</taxon>
        <taxon>Bacillati</taxon>
        <taxon>Actinomycetota</taxon>
        <taxon>Actinomycetes</taxon>
        <taxon>Mycobacteriales</taxon>
        <taxon>Mycobacteriaceae</taxon>
        <taxon>Mycobacterium</taxon>
        <taxon>Mycobacterium tuberculosis complex</taxon>
    </lineage>
</organism>
<gene>
    <name type="primary">serC</name>
    <name type="ordered locus">Rv0884c</name>
    <name type="ORF">MTCY31.12c</name>
</gene>
<proteinExistence type="evidence at protein level"/>
<dbReference type="EC" id="2.6.1.52"/>
<dbReference type="EMBL" id="AL123456">
    <property type="protein sequence ID" value="CCP43632.1"/>
    <property type="molecule type" value="Genomic_DNA"/>
</dbReference>
<dbReference type="PIR" id="A70781">
    <property type="entry name" value="A70781"/>
</dbReference>
<dbReference type="RefSeq" id="NP_215399.1">
    <property type="nucleotide sequence ID" value="NC_000962.3"/>
</dbReference>
<dbReference type="RefSeq" id="WP_003404623.1">
    <property type="nucleotide sequence ID" value="NZ_NVQJ01000001.1"/>
</dbReference>
<dbReference type="PDB" id="2FYF">
    <property type="method" value="X-ray"/>
    <property type="resolution" value="1.50 A"/>
    <property type="chains" value="A/B=1-376"/>
</dbReference>
<dbReference type="PDB" id="3VOM">
    <property type="method" value="X-ray"/>
    <property type="resolution" value="2.10 A"/>
    <property type="chains" value="A/B=1-376"/>
</dbReference>
<dbReference type="PDBsum" id="2FYF"/>
<dbReference type="PDBsum" id="3VOM"/>
<dbReference type="SMR" id="P9WQ73"/>
<dbReference type="FunCoup" id="P9WQ73">
    <property type="interactions" value="456"/>
</dbReference>
<dbReference type="STRING" id="83332.Rv0884c"/>
<dbReference type="iPTMnet" id="P9WQ73"/>
<dbReference type="PaxDb" id="83332-Rv0884c"/>
<dbReference type="DNASU" id="885140"/>
<dbReference type="GeneID" id="885140"/>
<dbReference type="KEGG" id="mtu:Rv0884c"/>
<dbReference type="KEGG" id="mtv:RVBD_0884c"/>
<dbReference type="TubercuList" id="Rv0884c"/>
<dbReference type="eggNOG" id="COG1932">
    <property type="taxonomic scope" value="Bacteria"/>
</dbReference>
<dbReference type="InParanoid" id="P9WQ73"/>
<dbReference type="OrthoDB" id="975012at2"/>
<dbReference type="PhylomeDB" id="P9WQ73"/>
<dbReference type="BRENDA" id="2.6.1.52">
    <property type="organism ID" value="3445"/>
</dbReference>
<dbReference type="UniPathway" id="UPA00135">
    <property type="reaction ID" value="UER00197"/>
</dbReference>
<dbReference type="UniPathway" id="UPA00244">
    <property type="reaction ID" value="UER00311"/>
</dbReference>
<dbReference type="EvolutionaryTrace" id="P9WQ73"/>
<dbReference type="Proteomes" id="UP000001584">
    <property type="component" value="Chromosome"/>
</dbReference>
<dbReference type="GO" id="GO:0005737">
    <property type="term" value="C:cytoplasm"/>
    <property type="evidence" value="ECO:0007669"/>
    <property type="project" value="UniProtKB-SubCell"/>
</dbReference>
<dbReference type="GO" id="GO:0005576">
    <property type="term" value="C:extracellular region"/>
    <property type="evidence" value="ECO:0007005"/>
    <property type="project" value="MTBBASE"/>
</dbReference>
<dbReference type="GO" id="GO:0005886">
    <property type="term" value="C:plasma membrane"/>
    <property type="evidence" value="ECO:0007005"/>
    <property type="project" value="MTBBASE"/>
</dbReference>
<dbReference type="GO" id="GO:0008453">
    <property type="term" value="F:alanine-glyoxylate transaminase activity"/>
    <property type="evidence" value="ECO:0000318"/>
    <property type="project" value="GO_Central"/>
</dbReference>
<dbReference type="GO" id="GO:0004760">
    <property type="term" value="F:L-serine-pyruvate transaminase activity"/>
    <property type="evidence" value="ECO:0000318"/>
    <property type="project" value="GO_Central"/>
</dbReference>
<dbReference type="GO" id="GO:0004648">
    <property type="term" value="F:O-phospho-L-serine:2-oxoglutarate aminotransferase activity"/>
    <property type="evidence" value="ECO:0007669"/>
    <property type="project" value="UniProtKB-UniRule"/>
</dbReference>
<dbReference type="GO" id="GO:0030170">
    <property type="term" value="F:pyridoxal phosphate binding"/>
    <property type="evidence" value="ECO:0007669"/>
    <property type="project" value="UniProtKB-UniRule"/>
</dbReference>
<dbReference type="GO" id="GO:0019265">
    <property type="term" value="P:glycine biosynthetic process, by transamination of glyoxylate"/>
    <property type="evidence" value="ECO:0000318"/>
    <property type="project" value="GO_Central"/>
</dbReference>
<dbReference type="GO" id="GO:0006564">
    <property type="term" value="P:L-serine biosynthetic process"/>
    <property type="evidence" value="ECO:0007669"/>
    <property type="project" value="UniProtKB-UniRule"/>
</dbReference>
<dbReference type="GO" id="GO:0008615">
    <property type="term" value="P:pyridoxine biosynthetic process"/>
    <property type="evidence" value="ECO:0007669"/>
    <property type="project" value="UniProtKB-UniRule"/>
</dbReference>
<dbReference type="FunFam" id="3.90.1150.10:FF:000084">
    <property type="entry name" value="Phosphoserine aminotransferase"/>
    <property type="match status" value="1"/>
</dbReference>
<dbReference type="Gene3D" id="3.90.1150.10">
    <property type="entry name" value="Aspartate Aminotransferase, domain 1"/>
    <property type="match status" value="1"/>
</dbReference>
<dbReference type="Gene3D" id="3.40.640.10">
    <property type="entry name" value="Type I PLP-dependent aspartate aminotransferase-like (Major domain)"/>
    <property type="match status" value="1"/>
</dbReference>
<dbReference type="HAMAP" id="MF_00160">
    <property type="entry name" value="SerC_aminotrans_5"/>
    <property type="match status" value="1"/>
</dbReference>
<dbReference type="InterPro" id="IPR000192">
    <property type="entry name" value="Aminotrans_V_dom"/>
</dbReference>
<dbReference type="InterPro" id="IPR022278">
    <property type="entry name" value="Pser_aminoTfrase"/>
</dbReference>
<dbReference type="InterPro" id="IPR006272">
    <property type="entry name" value="Pser_aminoTfrase_mycobac"/>
</dbReference>
<dbReference type="InterPro" id="IPR015424">
    <property type="entry name" value="PyrdxlP-dep_Trfase"/>
</dbReference>
<dbReference type="InterPro" id="IPR015421">
    <property type="entry name" value="PyrdxlP-dep_Trfase_major"/>
</dbReference>
<dbReference type="InterPro" id="IPR015422">
    <property type="entry name" value="PyrdxlP-dep_Trfase_small"/>
</dbReference>
<dbReference type="NCBIfam" id="TIGR01366">
    <property type="entry name" value="serC_3"/>
    <property type="match status" value="1"/>
</dbReference>
<dbReference type="PANTHER" id="PTHR21152:SF40">
    <property type="entry name" value="ALANINE--GLYOXYLATE AMINOTRANSFERASE"/>
    <property type="match status" value="1"/>
</dbReference>
<dbReference type="PANTHER" id="PTHR21152">
    <property type="entry name" value="AMINOTRANSFERASE CLASS V"/>
    <property type="match status" value="1"/>
</dbReference>
<dbReference type="Pfam" id="PF00266">
    <property type="entry name" value="Aminotran_5"/>
    <property type="match status" value="1"/>
</dbReference>
<dbReference type="PIRSF" id="PIRSF000525">
    <property type="entry name" value="SerC"/>
    <property type="match status" value="1"/>
</dbReference>
<dbReference type="SUPFAM" id="SSF53383">
    <property type="entry name" value="PLP-dependent transferases"/>
    <property type="match status" value="1"/>
</dbReference>
<sequence>MADQLTPHLEIPTAIKPRDGRFGSGPSKVRLEQLQTLTTTAAALFGTSHRQAPVKNLVGRVRSGLAELFSLPDGYEVILGNGGATAFWDAAAFGLIDKRSLHLTYGEFSAKFASAVSKNPFVGEPIIITSDPGSAPEPQTDPSVDVIAWAHNETSTGVAVAVRRPEGSDDALVVIDATSGAGGLPVDIAETDAYYFAPQKNFASDGGLWLAIMSPAALSRIEAIAATGRWVPDFLSLPIAVENSLKNQTYNTPAIATLALLAEQIDWLVGNGGLDWAVKRTADSSQRLYSWAQERPYTTPFVTDPGLRSQVVGTIDFVDDVDAGTVAKILRANGIVDTEPYRKLGRNQLRVAMFPAVEPDDVSALTECVDWVVERL</sequence>
<reference key="1">
    <citation type="journal article" date="1998" name="Nature">
        <title>Deciphering the biology of Mycobacterium tuberculosis from the complete genome sequence.</title>
        <authorList>
            <person name="Cole S.T."/>
            <person name="Brosch R."/>
            <person name="Parkhill J."/>
            <person name="Garnier T."/>
            <person name="Churcher C.M."/>
            <person name="Harris D.E."/>
            <person name="Gordon S.V."/>
            <person name="Eiglmeier K."/>
            <person name="Gas S."/>
            <person name="Barry C.E. III"/>
            <person name="Tekaia F."/>
            <person name="Badcock K."/>
            <person name="Basham D."/>
            <person name="Brown D."/>
            <person name="Chillingworth T."/>
            <person name="Connor R."/>
            <person name="Davies R.M."/>
            <person name="Devlin K."/>
            <person name="Feltwell T."/>
            <person name="Gentles S."/>
            <person name="Hamlin N."/>
            <person name="Holroyd S."/>
            <person name="Hornsby T."/>
            <person name="Jagels K."/>
            <person name="Krogh A."/>
            <person name="McLean J."/>
            <person name="Moule S."/>
            <person name="Murphy L.D."/>
            <person name="Oliver S."/>
            <person name="Osborne J."/>
            <person name="Quail M.A."/>
            <person name="Rajandream M.A."/>
            <person name="Rogers J."/>
            <person name="Rutter S."/>
            <person name="Seeger K."/>
            <person name="Skelton S."/>
            <person name="Squares S."/>
            <person name="Squares R."/>
            <person name="Sulston J.E."/>
            <person name="Taylor K."/>
            <person name="Whitehead S."/>
            <person name="Barrell B.G."/>
        </authorList>
    </citation>
    <scope>NUCLEOTIDE SEQUENCE [LARGE SCALE GENOMIC DNA]</scope>
    <source>
        <strain>ATCC 25618 / H37Rv</strain>
    </source>
</reference>
<reference key="2">
    <citation type="journal article" date="2022" name="Genomics">
        <title>Deep N-terminomics of Mycobacterium tuberculosis H37Rv extensively correct annotated encoding genes.</title>
        <authorList>
            <person name="Shi J."/>
            <person name="Meng S."/>
            <person name="Wan L."/>
            <person name="Zhang Z."/>
            <person name="Jiang S."/>
            <person name="Zhu H."/>
            <person name="Dai E."/>
            <person name="Chang L."/>
            <person name="Gao H."/>
            <person name="Wan K."/>
            <person name="Zhang L."/>
            <person name="Zhao X."/>
            <person name="Liu H."/>
            <person name="Lyu Z."/>
            <person name="Zhang Y."/>
            <person name="Xu P."/>
        </authorList>
    </citation>
    <scope>PROTEIN SEQUENCE OF 2-18</scope>
    <source>
        <strain>H37Rv</strain>
    </source>
</reference>
<reference key="3">
    <citation type="journal article" date="2011" name="Mol. Cell. Proteomics">
        <title>Proteogenomic analysis of Mycobacterium tuberculosis by high resolution mass spectrometry.</title>
        <authorList>
            <person name="Kelkar D.S."/>
            <person name="Kumar D."/>
            <person name="Kumar P."/>
            <person name="Balakrishnan L."/>
            <person name="Muthusamy B."/>
            <person name="Yadav A.K."/>
            <person name="Shrivastava P."/>
            <person name="Marimuthu A."/>
            <person name="Anand S."/>
            <person name="Sundaram H."/>
            <person name="Kingsbury R."/>
            <person name="Harsha H.C."/>
            <person name="Nair B."/>
            <person name="Prasad T.S."/>
            <person name="Chauhan D.S."/>
            <person name="Katoch K."/>
            <person name="Katoch V.M."/>
            <person name="Kumar P."/>
            <person name="Chaerkady R."/>
            <person name="Ramachandran S."/>
            <person name="Dash D."/>
            <person name="Pandey A."/>
        </authorList>
    </citation>
    <scope>ACETYLATION [LARGE SCALE ANALYSIS] AT ALA-2</scope>
    <scope>CLEAVAGE OF INITIATOR METHIONINE [LARGE SCALE ANALYSIS]</scope>
    <scope>IDENTIFICATION BY MASS SPECTROMETRY [LARGE SCALE ANALYSIS]</scope>
    <source>
        <strain>ATCC 25618 / H37Rv</strain>
    </source>
</reference>
<reference key="4">
    <citation type="journal article" date="2012" name="Acta Crystallogr. D">
        <title>Structure of phosphoserine aminotransferase from Mycobacterium tuberculosis.</title>
        <authorList>
            <person name="Coulibaly F."/>
            <person name="Lassalle E."/>
            <person name="Baker H.M."/>
            <person name="Baker E.N."/>
        </authorList>
    </citation>
    <scope>X-RAY CRYSTALLOGRAPHY (1.5 ANGSTROMS) IN COMPLEX WITH PYRIDOXAL PHOSPHATE</scope>
    <scope>COFACTOR</scope>
    <scope>SUBUNIT</scope>
</reference>
<comment type="function">
    <text evidence="1">Catalyzes the reversible conversion of 3-phosphohydroxypyruvate to phosphoserine and of 3-hydroxy-2-oxo-4-phosphonooxybutanoate to phosphohydroxythreonine.</text>
</comment>
<comment type="catalytic activity">
    <reaction>
        <text>O-phospho-L-serine + 2-oxoglutarate = 3-phosphooxypyruvate + L-glutamate</text>
        <dbReference type="Rhea" id="RHEA:14329"/>
        <dbReference type="ChEBI" id="CHEBI:16810"/>
        <dbReference type="ChEBI" id="CHEBI:18110"/>
        <dbReference type="ChEBI" id="CHEBI:29985"/>
        <dbReference type="ChEBI" id="CHEBI:57524"/>
        <dbReference type="EC" id="2.6.1.52"/>
    </reaction>
</comment>
<comment type="catalytic activity">
    <reaction>
        <text>4-(phosphooxy)-L-threonine + 2-oxoglutarate = (R)-3-hydroxy-2-oxo-4-phosphooxybutanoate + L-glutamate</text>
        <dbReference type="Rhea" id="RHEA:16573"/>
        <dbReference type="ChEBI" id="CHEBI:16810"/>
        <dbReference type="ChEBI" id="CHEBI:29985"/>
        <dbReference type="ChEBI" id="CHEBI:58452"/>
        <dbReference type="ChEBI" id="CHEBI:58538"/>
        <dbReference type="EC" id="2.6.1.52"/>
    </reaction>
</comment>
<comment type="cofactor">
    <cofactor evidence="2">
        <name>pyridoxal 5'-phosphate</name>
        <dbReference type="ChEBI" id="CHEBI:597326"/>
    </cofactor>
    <text evidence="2">Binds 1 pyridoxal phosphate per subunit.</text>
</comment>
<comment type="pathway">
    <text>Amino-acid biosynthesis; L-serine biosynthesis; L-serine from 3-phospho-D-glycerate: step 2/3.</text>
</comment>
<comment type="pathway">
    <text>Cofactor biosynthesis; pyridoxine 5'-phosphate biosynthesis; pyridoxine 5'-phosphate from D-erythrose 4-phosphate: step 3/5.</text>
</comment>
<comment type="subunit">
    <text evidence="2">Homodimer.</text>
</comment>
<comment type="subcellular location">
    <subcellularLocation>
        <location evidence="1">Cytoplasm</location>
    </subcellularLocation>
</comment>
<comment type="similarity">
    <text evidence="4">Belongs to the class-V pyridoxal-phosphate-dependent aminotransferase family. SerC subfamily.</text>
</comment>
<keyword id="KW-0002">3D-structure</keyword>
<keyword id="KW-0007">Acetylation</keyword>
<keyword id="KW-0028">Amino-acid biosynthesis</keyword>
<keyword id="KW-0032">Aminotransferase</keyword>
<keyword id="KW-0963">Cytoplasm</keyword>
<keyword id="KW-0903">Direct protein sequencing</keyword>
<keyword id="KW-0663">Pyridoxal phosphate</keyword>
<keyword id="KW-0664">Pyridoxine biosynthesis</keyword>
<keyword id="KW-1185">Reference proteome</keyword>
<keyword id="KW-0718">Serine biosynthesis</keyword>
<keyword id="KW-0808">Transferase</keyword>
<feature type="initiator methionine" description="Removed" evidence="3 5">
    <location>
        <position position="1"/>
    </location>
</feature>
<feature type="chain" id="PRO_0000150188" description="Phosphoserine aminotransferase">
    <location>
        <begin position="2"/>
        <end position="376"/>
    </location>
</feature>
<feature type="binding site" evidence="1">
    <location>
        <position position="50"/>
    </location>
    <ligand>
        <name>L-glutamate</name>
        <dbReference type="ChEBI" id="CHEBI:29985"/>
    </ligand>
</feature>
<feature type="binding site">
    <location>
        <begin position="84"/>
        <end position="85"/>
    </location>
    <ligand>
        <name>pyridoxal 5'-phosphate</name>
        <dbReference type="ChEBI" id="CHEBI:597326"/>
    </ligand>
</feature>
<feature type="binding site" evidence="1">
    <location>
        <position position="108"/>
    </location>
    <ligand>
        <name>pyridoxal 5'-phosphate</name>
        <dbReference type="ChEBI" id="CHEBI:597326"/>
    </ligand>
</feature>
<feature type="binding site" evidence="2">
    <location>
        <position position="154"/>
    </location>
    <ligand>
        <name>pyridoxal 5'-phosphate</name>
        <dbReference type="ChEBI" id="CHEBI:597326"/>
    </ligand>
</feature>
<feature type="binding site" evidence="2">
    <location>
        <position position="176"/>
    </location>
    <ligand>
        <name>pyridoxal 5'-phosphate</name>
        <dbReference type="ChEBI" id="CHEBI:597326"/>
    </ligand>
</feature>
<feature type="binding site" evidence="2">
    <location>
        <position position="199"/>
    </location>
    <ligand>
        <name>pyridoxal 5'-phosphate</name>
        <dbReference type="ChEBI" id="CHEBI:597326"/>
    </ligand>
</feature>
<feature type="binding site">
    <location>
        <begin position="251"/>
        <end position="252"/>
    </location>
    <ligand>
        <name>pyridoxal 5'-phosphate</name>
        <dbReference type="ChEBI" id="CHEBI:597326"/>
    </ligand>
</feature>
<feature type="modified residue" description="N-acetylalanine" evidence="5">
    <location>
        <position position="2"/>
    </location>
</feature>
<feature type="modified residue" description="N6-(pyridoxal phosphate)lysine" evidence="1">
    <location>
        <position position="200"/>
    </location>
</feature>
<feature type="helix" evidence="6">
    <location>
        <begin position="13"/>
        <end position="15"/>
    </location>
</feature>
<feature type="strand" evidence="6">
    <location>
        <begin position="24"/>
        <end position="26"/>
    </location>
</feature>
<feature type="helix" evidence="6">
    <location>
        <begin position="31"/>
        <end position="35"/>
    </location>
</feature>
<feature type="helix" evidence="6">
    <location>
        <begin position="36"/>
        <end position="38"/>
    </location>
</feature>
<feature type="turn" evidence="6">
    <location>
        <begin position="39"/>
        <end position="46"/>
    </location>
</feature>
<feature type="helix" evidence="6">
    <location>
        <begin position="52"/>
        <end position="68"/>
    </location>
</feature>
<feature type="strand" evidence="6">
    <location>
        <begin position="76"/>
        <end position="81"/>
    </location>
</feature>
<feature type="helix" evidence="6">
    <location>
        <begin position="84"/>
        <end position="94"/>
    </location>
</feature>
<feature type="strand" evidence="6">
    <location>
        <begin position="100"/>
        <end position="104"/>
    </location>
</feature>
<feature type="helix" evidence="6">
    <location>
        <begin position="107"/>
        <end position="118"/>
    </location>
</feature>
<feature type="strand" evidence="6">
    <location>
        <begin position="126"/>
        <end position="129"/>
    </location>
</feature>
<feature type="strand" evidence="6">
    <location>
        <begin position="145"/>
        <end position="152"/>
    </location>
</feature>
<feature type="turn" evidence="6">
    <location>
        <begin position="154"/>
        <end position="156"/>
    </location>
</feature>
<feature type="strand" evidence="6">
    <location>
        <begin position="172"/>
        <end position="176"/>
    </location>
</feature>
<feature type="turn" evidence="6">
    <location>
        <begin position="178"/>
        <end position="183"/>
    </location>
</feature>
<feature type="helix" evidence="6">
    <location>
        <begin position="188"/>
        <end position="190"/>
    </location>
</feature>
<feature type="strand" evidence="6">
    <location>
        <begin position="192"/>
        <end position="196"/>
    </location>
</feature>
<feature type="strand" evidence="6">
    <location>
        <begin position="206"/>
        <end position="213"/>
    </location>
</feature>
<feature type="helix" evidence="6">
    <location>
        <begin position="215"/>
        <end position="226"/>
    </location>
</feature>
<feature type="helix" evidence="6">
    <location>
        <begin position="233"/>
        <end position="235"/>
    </location>
</feature>
<feature type="helix" evidence="6">
    <location>
        <begin position="237"/>
        <end position="244"/>
    </location>
</feature>
<feature type="turn" evidence="6">
    <location>
        <begin position="245"/>
        <end position="247"/>
    </location>
</feature>
<feature type="helix" evidence="6">
    <location>
        <begin position="255"/>
        <end position="271"/>
    </location>
</feature>
<feature type="helix" evidence="6">
    <location>
        <begin position="274"/>
        <end position="294"/>
    </location>
</feature>
<feature type="strand" evidence="6">
    <location>
        <begin position="298"/>
        <end position="301"/>
    </location>
</feature>
<feature type="helix" evidence="6">
    <location>
        <begin position="305"/>
        <end position="307"/>
    </location>
</feature>
<feature type="strand" evidence="6">
    <location>
        <begin position="310"/>
        <end position="317"/>
    </location>
</feature>
<feature type="helix" evidence="6">
    <location>
        <begin position="323"/>
        <end position="332"/>
    </location>
</feature>
<feature type="turn" evidence="7">
    <location>
        <begin position="342"/>
        <end position="344"/>
    </location>
</feature>
<feature type="strand" evidence="6">
    <location>
        <begin position="346"/>
        <end position="352"/>
    </location>
</feature>
<feature type="helix" evidence="6">
    <location>
        <begin position="359"/>
        <end position="374"/>
    </location>
</feature>
<protein>
    <recommendedName>
        <fullName>Phosphoserine aminotransferase</fullName>
        <ecNumber>2.6.1.52</ecNumber>
    </recommendedName>
    <alternativeName>
        <fullName>Phosphohydroxythreonine aminotransferase</fullName>
        <shortName>PSAT</shortName>
    </alternativeName>
</protein>
<evidence type="ECO:0000250" key="1"/>
<evidence type="ECO:0000269" key="2">
    <source>
    </source>
</evidence>
<evidence type="ECO:0000269" key="3">
    <source>
    </source>
</evidence>
<evidence type="ECO:0000305" key="4"/>
<evidence type="ECO:0007744" key="5">
    <source>
    </source>
</evidence>
<evidence type="ECO:0007829" key="6">
    <source>
        <dbReference type="PDB" id="2FYF"/>
    </source>
</evidence>
<evidence type="ECO:0007829" key="7">
    <source>
        <dbReference type="PDB" id="3VOM"/>
    </source>
</evidence>
<name>SERC_MYCTU</name>